<protein>
    <recommendedName>
        <fullName evidence="1">Ribosome rescue factor SmrB</fullName>
        <ecNumber evidence="1">3.1.-.-</ecNumber>
    </recommendedName>
</protein>
<sequence>MKKKTTLSEEDQALFRQLMAGTRKIKQDTIVHRPQRKKVSEVPVKRLIQEQVDASHYFSDEFQPLLNADGPVKYVRPGVDHFEAKKLRRGDYSPELFLDLHGLTQLQAKQELGALIAACRREHVFCACVMHGHGKHILKQQTPLWLAQHPHVMAFHQAPKEYGGDAALLVLIEVEEWLPPELP</sequence>
<accession>Q8X5C4</accession>
<accession>A0A0H3JGM7</accession>
<accession>A0A6M0JRR2</accession>
<reference key="1">
    <citation type="journal article" date="2001" name="Nature">
        <title>Genome sequence of enterohaemorrhagic Escherichia coli O157:H7.</title>
        <authorList>
            <person name="Perna N.T."/>
            <person name="Plunkett G. III"/>
            <person name="Burland V."/>
            <person name="Mau B."/>
            <person name="Glasner J.D."/>
            <person name="Rose D.J."/>
            <person name="Mayhew G.F."/>
            <person name="Evans P.S."/>
            <person name="Gregor J."/>
            <person name="Kirkpatrick H.A."/>
            <person name="Posfai G."/>
            <person name="Hackett J."/>
            <person name="Klink S."/>
            <person name="Boutin A."/>
            <person name="Shao Y."/>
            <person name="Miller L."/>
            <person name="Grotbeck E.J."/>
            <person name="Davis N.W."/>
            <person name="Lim A."/>
            <person name="Dimalanta E.T."/>
            <person name="Potamousis K."/>
            <person name="Apodaca J."/>
            <person name="Anantharaman T.S."/>
            <person name="Lin J."/>
            <person name="Yen G."/>
            <person name="Schwartz D.C."/>
            <person name="Welch R.A."/>
            <person name="Blattner F.R."/>
        </authorList>
    </citation>
    <scope>NUCLEOTIDE SEQUENCE [LARGE SCALE GENOMIC DNA]</scope>
    <source>
        <strain>O157:H7 / EDL933 / ATCC 700927 / EHEC</strain>
    </source>
</reference>
<reference key="2">
    <citation type="journal article" date="2001" name="DNA Res.">
        <title>Complete genome sequence of enterohemorrhagic Escherichia coli O157:H7 and genomic comparison with a laboratory strain K-12.</title>
        <authorList>
            <person name="Hayashi T."/>
            <person name="Makino K."/>
            <person name="Ohnishi M."/>
            <person name="Kurokawa K."/>
            <person name="Ishii K."/>
            <person name="Yokoyama K."/>
            <person name="Han C.-G."/>
            <person name="Ohtsubo E."/>
            <person name="Nakayama K."/>
            <person name="Murata T."/>
            <person name="Tanaka M."/>
            <person name="Tobe T."/>
            <person name="Iida T."/>
            <person name="Takami H."/>
            <person name="Honda T."/>
            <person name="Sasakawa C."/>
            <person name="Ogasawara N."/>
            <person name="Yasunaga T."/>
            <person name="Kuhara S."/>
            <person name="Shiba T."/>
            <person name="Hattori M."/>
            <person name="Shinagawa H."/>
        </authorList>
    </citation>
    <scope>NUCLEOTIDE SEQUENCE [LARGE SCALE GENOMIC DNA]</scope>
    <source>
        <strain>O157:H7 / Sakai / RIMD 0509952 / EHEC</strain>
    </source>
</reference>
<organism>
    <name type="scientific">Escherichia coli O157:H7</name>
    <dbReference type="NCBI Taxonomy" id="83334"/>
    <lineage>
        <taxon>Bacteria</taxon>
        <taxon>Pseudomonadati</taxon>
        <taxon>Pseudomonadota</taxon>
        <taxon>Gammaproteobacteria</taxon>
        <taxon>Enterobacterales</taxon>
        <taxon>Enterobacteriaceae</taxon>
        <taxon>Escherichia</taxon>
    </lineage>
</organism>
<evidence type="ECO:0000255" key="1">
    <source>
        <dbReference type="HAMAP-Rule" id="MF_01042"/>
    </source>
</evidence>
<name>SMRB_ECO57</name>
<feature type="chain" id="PRO_0000214553" description="Ribosome rescue factor SmrB">
    <location>
        <begin position="1"/>
        <end position="183"/>
    </location>
</feature>
<feature type="domain" description="Smr" evidence="1">
    <location>
        <begin position="98"/>
        <end position="173"/>
    </location>
</feature>
<proteinExistence type="inferred from homology"/>
<keyword id="KW-0255">Endonuclease</keyword>
<keyword id="KW-0378">Hydrolase</keyword>
<keyword id="KW-0540">Nuclease</keyword>
<keyword id="KW-1185">Reference proteome</keyword>
<keyword id="KW-0694">RNA-binding</keyword>
<keyword id="KW-0699">rRNA-binding</keyword>
<gene>
    <name evidence="1" type="primary">smrB</name>
    <name type="ordered locus">Z3594</name>
    <name type="ordered locus">ECs3215</name>
</gene>
<dbReference type="EC" id="3.1.-.-" evidence="1"/>
<dbReference type="EMBL" id="AE005174">
    <property type="protein sequence ID" value="AAG57460.1"/>
    <property type="molecule type" value="Genomic_DNA"/>
</dbReference>
<dbReference type="EMBL" id="BA000007">
    <property type="protein sequence ID" value="BAB36637.2"/>
    <property type="molecule type" value="Genomic_DNA"/>
</dbReference>
<dbReference type="PIR" id="G91030">
    <property type="entry name" value="G91030"/>
</dbReference>
<dbReference type="PIR" id="H85874">
    <property type="entry name" value="H85874"/>
</dbReference>
<dbReference type="RefSeq" id="NP_311241.2">
    <property type="nucleotide sequence ID" value="NC_002695.1"/>
</dbReference>
<dbReference type="RefSeq" id="WP_000730817.1">
    <property type="nucleotide sequence ID" value="NZ_VOAI01000001.1"/>
</dbReference>
<dbReference type="SMR" id="Q8X5C4"/>
<dbReference type="STRING" id="155864.Z3594"/>
<dbReference type="GeneID" id="915690"/>
<dbReference type="KEGG" id="ece:Z3594"/>
<dbReference type="KEGG" id="ecs:ECs_3215"/>
<dbReference type="PATRIC" id="fig|386585.9.peg.3356"/>
<dbReference type="eggNOG" id="COG2840">
    <property type="taxonomic scope" value="Bacteria"/>
</dbReference>
<dbReference type="eggNOG" id="COG2890">
    <property type="taxonomic scope" value="Bacteria"/>
</dbReference>
<dbReference type="HOGENOM" id="CLU_055978_4_0_6"/>
<dbReference type="OMA" id="CIMHGHG"/>
<dbReference type="Proteomes" id="UP000000558">
    <property type="component" value="Chromosome"/>
</dbReference>
<dbReference type="Proteomes" id="UP000002519">
    <property type="component" value="Chromosome"/>
</dbReference>
<dbReference type="GO" id="GO:0004521">
    <property type="term" value="F:RNA endonuclease activity"/>
    <property type="evidence" value="ECO:0007669"/>
    <property type="project" value="UniProtKB-UniRule"/>
</dbReference>
<dbReference type="GO" id="GO:0019843">
    <property type="term" value="F:rRNA binding"/>
    <property type="evidence" value="ECO:0007669"/>
    <property type="project" value="UniProtKB-UniRule"/>
</dbReference>
<dbReference type="GO" id="GO:0072344">
    <property type="term" value="P:rescue of stalled ribosome"/>
    <property type="evidence" value="ECO:0007669"/>
    <property type="project" value="UniProtKB-UniRule"/>
</dbReference>
<dbReference type="Gene3D" id="3.30.1370.110">
    <property type="match status" value="1"/>
</dbReference>
<dbReference type="HAMAP" id="MF_01042">
    <property type="entry name" value="SmrB"/>
    <property type="match status" value="1"/>
</dbReference>
<dbReference type="InterPro" id="IPR002625">
    <property type="entry name" value="Smr_dom"/>
</dbReference>
<dbReference type="InterPro" id="IPR036063">
    <property type="entry name" value="Smr_dom_sf"/>
</dbReference>
<dbReference type="InterPro" id="IPR022990">
    <property type="entry name" value="SmrB-like"/>
</dbReference>
<dbReference type="NCBIfam" id="NF003432">
    <property type="entry name" value="PRK04946.1"/>
    <property type="match status" value="1"/>
</dbReference>
<dbReference type="PANTHER" id="PTHR35562">
    <property type="entry name" value="DNA ENDONUCLEASE SMRA-RELATED"/>
    <property type="match status" value="1"/>
</dbReference>
<dbReference type="PANTHER" id="PTHR35562:SF1">
    <property type="entry name" value="UPF0115 PROTEIN YFCN"/>
    <property type="match status" value="1"/>
</dbReference>
<dbReference type="Pfam" id="PF01713">
    <property type="entry name" value="Smr"/>
    <property type="match status" value="1"/>
</dbReference>
<dbReference type="SMART" id="SM00463">
    <property type="entry name" value="SMR"/>
    <property type="match status" value="1"/>
</dbReference>
<dbReference type="SUPFAM" id="SSF160443">
    <property type="entry name" value="SMR domain-like"/>
    <property type="match status" value="1"/>
</dbReference>
<dbReference type="PROSITE" id="PS50828">
    <property type="entry name" value="SMR"/>
    <property type="match status" value="1"/>
</dbReference>
<comment type="function">
    <text evidence="1">Acts as a ribosome collision sensor. Detects stalled/collided disomes (pairs of ribosomes where the leading ribosome is stalled and a second ribosome has collided with it) and endonucleolytically cleaves mRNA at the 5' boundary of the stalled ribosome. Stalled/collided disomes form a new interface (primarily via the 30S subunits) that binds SmrB. Cleaved mRNA becomes available for tmRNA ligation, leading to ribosomal subunit dissociation and rescue of stalled ribosomes.</text>
</comment>
<comment type="subunit">
    <text evidence="1">Associates with collided ribosomes, but not with correctly translating polysomes.</text>
</comment>
<comment type="similarity">
    <text evidence="1">Belongs to the SmrB family.</text>
</comment>